<accession>Q3AP35</accession>
<dbReference type="EMBL" id="CP000108">
    <property type="protein sequence ID" value="ABB29240.1"/>
    <property type="molecule type" value="Genomic_DNA"/>
</dbReference>
<dbReference type="SMR" id="Q3AP35"/>
<dbReference type="STRING" id="340177.Cag_1992"/>
<dbReference type="KEGG" id="cch:Cag_1992"/>
<dbReference type="eggNOG" id="COG0792">
    <property type="taxonomic scope" value="Bacteria"/>
</dbReference>
<dbReference type="HOGENOM" id="CLU_115353_2_1_10"/>
<dbReference type="OrthoDB" id="9802516at2"/>
<dbReference type="GO" id="GO:0003676">
    <property type="term" value="F:nucleic acid binding"/>
    <property type="evidence" value="ECO:0007669"/>
    <property type="project" value="InterPro"/>
</dbReference>
<dbReference type="CDD" id="cd20736">
    <property type="entry name" value="PoNe_Nuclease"/>
    <property type="match status" value="1"/>
</dbReference>
<dbReference type="Gene3D" id="3.40.1350.10">
    <property type="match status" value="1"/>
</dbReference>
<dbReference type="HAMAP" id="MF_00048">
    <property type="entry name" value="UPF0102"/>
    <property type="match status" value="1"/>
</dbReference>
<dbReference type="InterPro" id="IPR011335">
    <property type="entry name" value="Restrct_endonuc-II-like"/>
</dbReference>
<dbReference type="InterPro" id="IPR011856">
    <property type="entry name" value="tRNA_endonuc-like_dom_sf"/>
</dbReference>
<dbReference type="InterPro" id="IPR003509">
    <property type="entry name" value="UPF0102_YraN-like"/>
</dbReference>
<dbReference type="NCBIfam" id="NF009150">
    <property type="entry name" value="PRK12497.1-3"/>
    <property type="match status" value="1"/>
</dbReference>
<dbReference type="NCBIfam" id="NF009154">
    <property type="entry name" value="PRK12497.3-3"/>
    <property type="match status" value="1"/>
</dbReference>
<dbReference type="NCBIfam" id="TIGR00252">
    <property type="entry name" value="YraN family protein"/>
    <property type="match status" value="1"/>
</dbReference>
<dbReference type="PANTHER" id="PTHR34039">
    <property type="entry name" value="UPF0102 PROTEIN YRAN"/>
    <property type="match status" value="1"/>
</dbReference>
<dbReference type="PANTHER" id="PTHR34039:SF1">
    <property type="entry name" value="UPF0102 PROTEIN YRAN"/>
    <property type="match status" value="1"/>
</dbReference>
<dbReference type="Pfam" id="PF02021">
    <property type="entry name" value="UPF0102"/>
    <property type="match status" value="1"/>
</dbReference>
<dbReference type="SUPFAM" id="SSF52980">
    <property type="entry name" value="Restriction endonuclease-like"/>
    <property type="match status" value="1"/>
</dbReference>
<evidence type="ECO:0000255" key="1">
    <source>
        <dbReference type="HAMAP-Rule" id="MF_00048"/>
    </source>
</evidence>
<proteinExistence type="inferred from homology"/>
<name>Y1992_CHLCH</name>
<organism>
    <name type="scientific">Chlorobium chlorochromatii (strain CaD3)</name>
    <dbReference type="NCBI Taxonomy" id="340177"/>
    <lineage>
        <taxon>Bacteria</taxon>
        <taxon>Pseudomonadati</taxon>
        <taxon>Chlorobiota</taxon>
        <taxon>Chlorobiia</taxon>
        <taxon>Chlorobiales</taxon>
        <taxon>Chlorobiaceae</taxon>
        <taxon>Chlorobium/Pelodictyon group</taxon>
        <taxon>Chlorobium</taxon>
    </lineage>
</organism>
<sequence length="129" mass="14533">MNPPNSTCELGRQGEALAATYLQNEGYQILERNYRFRHNEIDLIALDGSTLCFVEVKARLSNKAGSPLDAVTVAKQREIIRAAQAYLTFSGQECDCRFDVIGVNVHAMHEARISSFTIEHIKDAFWVEQ</sequence>
<comment type="similarity">
    <text evidence="1">Belongs to the UPF0102 family.</text>
</comment>
<reference key="1">
    <citation type="submission" date="2005-08" db="EMBL/GenBank/DDBJ databases">
        <title>Complete sequence of Chlorobium chlorochromatii CaD3.</title>
        <authorList>
            <consortium name="US DOE Joint Genome Institute"/>
            <person name="Copeland A."/>
            <person name="Lucas S."/>
            <person name="Lapidus A."/>
            <person name="Barry K."/>
            <person name="Detter J.C."/>
            <person name="Glavina T."/>
            <person name="Hammon N."/>
            <person name="Israni S."/>
            <person name="Pitluck S."/>
            <person name="Bryant D."/>
            <person name="Schmutz J."/>
            <person name="Larimer F."/>
            <person name="Land M."/>
            <person name="Kyrpides N."/>
            <person name="Ivanova N."/>
            <person name="Richardson P."/>
        </authorList>
    </citation>
    <scope>NUCLEOTIDE SEQUENCE [LARGE SCALE GENOMIC DNA]</scope>
    <source>
        <strain>CaD3</strain>
    </source>
</reference>
<protein>
    <recommendedName>
        <fullName evidence="1">UPF0102 protein Cag_1992</fullName>
    </recommendedName>
</protein>
<gene>
    <name type="ordered locus">Cag_1992</name>
</gene>
<feature type="chain" id="PRO_0000336155" description="UPF0102 protein Cag_1992">
    <location>
        <begin position="1"/>
        <end position="129"/>
    </location>
</feature>